<dbReference type="EC" id="2.3.1.234" evidence="1"/>
<dbReference type="EMBL" id="CP000235">
    <property type="protein sequence ID" value="ABD44170.1"/>
    <property type="molecule type" value="Genomic_DNA"/>
</dbReference>
<dbReference type="RefSeq" id="WP_011450734.1">
    <property type="nucleotide sequence ID" value="NC_007797.1"/>
</dbReference>
<dbReference type="SMR" id="Q2GK88"/>
<dbReference type="STRING" id="212042.APH_0626"/>
<dbReference type="PaxDb" id="212042-APH_0626"/>
<dbReference type="EnsemblBacteria" id="ABD44170">
    <property type="protein sequence ID" value="ABD44170"/>
    <property type="gene ID" value="APH_0626"/>
</dbReference>
<dbReference type="KEGG" id="aph:APH_0626"/>
<dbReference type="eggNOG" id="COG0533">
    <property type="taxonomic scope" value="Bacteria"/>
</dbReference>
<dbReference type="HOGENOM" id="CLU_023208_0_2_5"/>
<dbReference type="Proteomes" id="UP000001943">
    <property type="component" value="Chromosome"/>
</dbReference>
<dbReference type="GO" id="GO:0005737">
    <property type="term" value="C:cytoplasm"/>
    <property type="evidence" value="ECO:0007669"/>
    <property type="project" value="UniProtKB-SubCell"/>
</dbReference>
<dbReference type="GO" id="GO:0005506">
    <property type="term" value="F:iron ion binding"/>
    <property type="evidence" value="ECO:0007669"/>
    <property type="project" value="UniProtKB-UniRule"/>
</dbReference>
<dbReference type="GO" id="GO:0061711">
    <property type="term" value="F:N(6)-L-threonylcarbamoyladenine synthase activity"/>
    <property type="evidence" value="ECO:0007669"/>
    <property type="project" value="UniProtKB-EC"/>
</dbReference>
<dbReference type="GO" id="GO:0002949">
    <property type="term" value="P:tRNA threonylcarbamoyladenosine modification"/>
    <property type="evidence" value="ECO:0007669"/>
    <property type="project" value="UniProtKB-UniRule"/>
</dbReference>
<dbReference type="CDD" id="cd24133">
    <property type="entry name" value="ASKHA_NBD_TsaD_bac"/>
    <property type="match status" value="1"/>
</dbReference>
<dbReference type="FunFam" id="3.30.420.40:FF:000012">
    <property type="entry name" value="tRNA N6-adenosine threonylcarbamoyltransferase"/>
    <property type="match status" value="1"/>
</dbReference>
<dbReference type="FunFam" id="3.30.420.40:FF:000040">
    <property type="entry name" value="tRNA N6-adenosine threonylcarbamoyltransferase"/>
    <property type="match status" value="1"/>
</dbReference>
<dbReference type="Gene3D" id="3.30.420.40">
    <property type="match status" value="2"/>
</dbReference>
<dbReference type="HAMAP" id="MF_01445">
    <property type="entry name" value="TsaD"/>
    <property type="match status" value="1"/>
</dbReference>
<dbReference type="InterPro" id="IPR043129">
    <property type="entry name" value="ATPase_NBD"/>
</dbReference>
<dbReference type="InterPro" id="IPR000905">
    <property type="entry name" value="Gcp-like_dom"/>
</dbReference>
<dbReference type="InterPro" id="IPR017861">
    <property type="entry name" value="KAE1/TsaD"/>
</dbReference>
<dbReference type="InterPro" id="IPR022450">
    <property type="entry name" value="TsaD"/>
</dbReference>
<dbReference type="NCBIfam" id="TIGR00329">
    <property type="entry name" value="gcp_kae1"/>
    <property type="match status" value="1"/>
</dbReference>
<dbReference type="NCBIfam" id="TIGR03723">
    <property type="entry name" value="T6A_TsaD_YgjD"/>
    <property type="match status" value="1"/>
</dbReference>
<dbReference type="PANTHER" id="PTHR11735">
    <property type="entry name" value="TRNA N6-ADENOSINE THREONYLCARBAMOYLTRANSFERASE"/>
    <property type="match status" value="1"/>
</dbReference>
<dbReference type="PANTHER" id="PTHR11735:SF6">
    <property type="entry name" value="TRNA N6-ADENOSINE THREONYLCARBAMOYLTRANSFERASE, MITOCHONDRIAL"/>
    <property type="match status" value="1"/>
</dbReference>
<dbReference type="Pfam" id="PF00814">
    <property type="entry name" value="TsaD"/>
    <property type="match status" value="1"/>
</dbReference>
<dbReference type="PRINTS" id="PR00789">
    <property type="entry name" value="OSIALOPTASE"/>
</dbReference>
<dbReference type="SUPFAM" id="SSF53067">
    <property type="entry name" value="Actin-like ATPase domain"/>
    <property type="match status" value="1"/>
</dbReference>
<gene>
    <name evidence="1" type="primary">tsaD</name>
    <name type="synonym">gcp</name>
    <name type="ordered locus">APH_0626</name>
</gene>
<comment type="function">
    <text evidence="1">Required for the formation of a threonylcarbamoyl group on adenosine at position 37 (t(6)A37) in tRNAs that read codons beginning with adenine. Is involved in the transfer of the threonylcarbamoyl moiety of threonylcarbamoyl-AMP (TC-AMP) to the N6 group of A37, together with TsaE and TsaB. TsaD likely plays a direct catalytic role in this reaction.</text>
</comment>
<comment type="catalytic activity">
    <reaction evidence="1">
        <text>L-threonylcarbamoyladenylate + adenosine(37) in tRNA = N(6)-L-threonylcarbamoyladenosine(37) in tRNA + AMP + H(+)</text>
        <dbReference type="Rhea" id="RHEA:37059"/>
        <dbReference type="Rhea" id="RHEA-COMP:10162"/>
        <dbReference type="Rhea" id="RHEA-COMP:10163"/>
        <dbReference type="ChEBI" id="CHEBI:15378"/>
        <dbReference type="ChEBI" id="CHEBI:73682"/>
        <dbReference type="ChEBI" id="CHEBI:74411"/>
        <dbReference type="ChEBI" id="CHEBI:74418"/>
        <dbReference type="ChEBI" id="CHEBI:456215"/>
        <dbReference type="EC" id="2.3.1.234"/>
    </reaction>
</comment>
<comment type="cofactor">
    <cofactor evidence="1">
        <name>Fe(2+)</name>
        <dbReference type="ChEBI" id="CHEBI:29033"/>
    </cofactor>
    <text evidence="1">Binds 1 Fe(2+) ion per subunit.</text>
</comment>
<comment type="subcellular location">
    <subcellularLocation>
        <location evidence="1">Cytoplasm</location>
    </subcellularLocation>
</comment>
<comment type="similarity">
    <text evidence="1">Belongs to the KAE1 / TsaD family.</text>
</comment>
<proteinExistence type="inferred from homology"/>
<sequence>MGEVLLGIETSCDETAVAILTDSGEVFAHEVLSQVEHSAYGGVVPEIAARAHYDFLQVLVKKAMSNSGLKFDDLSSIAVTAGPGLVGSLIVGVMFAKAVSYATKKPIIAVNHLEAHALVARMNQEIVFPFLVLIVSGGHCQFMLAHDVGCYSKLGGAIDDSLGEAFDKVARMLGLGYPGGPAVECKAKNGRGDRFFFPRALHNRPGCDFSFSGLKTAVRYAIEREGPLDEEMVCDICASFQECVGDILVSRIRNAIKAARQLKEGIDKLVVTGGVASNGFLRTIISQCAEDMGVTAVFPPRELCTDNGIMVAWAGVENFRKGNAVASLGFAPRARWTMESIS</sequence>
<protein>
    <recommendedName>
        <fullName evidence="1">tRNA N6-adenosine threonylcarbamoyltransferase</fullName>
        <ecNumber evidence="1">2.3.1.234</ecNumber>
    </recommendedName>
    <alternativeName>
        <fullName evidence="1">N6-L-threonylcarbamoyladenine synthase</fullName>
        <shortName evidence="1">t(6)A synthase</shortName>
    </alternativeName>
    <alternativeName>
        <fullName evidence="1">t(6)A37 threonylcarbamoyladenosine biosynthesis protein TsaD</fullName>
    </alternativeName>
    <alternativeName>
        <fullName evidence="1">tRNA threonylcarbamoyladenosine biosynthesis protein TsaD</fullName>
    </alternativeName>
</protein>
<organism>
    <name type="scientific">Anaplasma phagocytophilum (strain HZ)</name>
    <dbReference type="NCBI Taxonomy" id="212042"/>
    <lineage>
        <taxon>Bacteria</taxon>
        <taxon>Pseudomonadati</taxon>
        <taxon>Pseudomonadota</taxon>
        <taxon>Alphaproteobacteria</taxon>
        <taxon>Rickettsiales</taxon>
        <taxon>Anaplasmataceae</taxon>
        <taxon>Anaplasma</taxon>
        <taxon>phagocytophilum group</taxon>
    </lineage>
</organism>
<accession>Q2GK88</accession>
<reference key="1">
    <citation type="journal article" date="2006" name="PLoS Genet.">
        <title>Comparative genomics of emerging human ehrlichiosis agents.</title>
        <authorList>
            <person name="Dunning Hotopp J.C."/>
            <person name="Lin M."/>
            <person name="Madupu R."/>
            <person name="Crabtree J."/>
            <person name="Angiuoli S.V."/>
            <person name="Eisen J.A."/>
            <person name="Seshadri R."/>
            <person name="Ren Q."/>
            <person name="Wu M."/>
            <person name="Utterback T.R."/>
            <person name="Smith S."/>
            <person name="Lewis M."/>
            <person name="Khouri H."/>
            <person name="Zhang C."/>
            <person name="Niu H."/>
            <person name="Lin Q."/>
            <person name="Ohashi N."/>
            <person name="Zhi N."/>
            <person name="Nelson W.C."/>
            <person name="Brinkac L.M."/>
            <person name="Dodson R.J."/>
            <person name="Rosovitz M.J."/>
            <person name="Sundaram J.P."/>
            <person name="Daugherty S.C."/>
            <person name="Davidsen T."/>
            <person name="Durkin A.S."/>
            <person name="Gwinn M.L."/>
            <person name="Haft D.H."/>
            <person name="Selengut J.D."/>
            <person name="Sullivan S.A."/>
            <person name="Zafar N."/>
            <person name="Zhou L."/>
            <person name="Benahmed F."/>
            <person name="Forberger H."/>
            <person name="Halpin R."/>
            <person name="Mulligan S."/>
            <person name="Robinson J."/>
            <person name="White O."/>
            <person name="Rikihisa Y."/>
            <person name="Tettelin H."/>
        </authorList>
    </citation>
    <scope>NUCLEOTIDE SEQUENCE [LARGE SCALE GENOMIC DNA]</scope>
    <source>
        <strain>HZ</strain>
    </source>
</reference>
<evidence type="ECO:0000255" key="1">
    <source>
        <dbReference type="HAMAP-Rule" id="MF_01445"/>
    </source>
</evidence>
<feature type="chain" id="PRO_0000303256" description="tRNA N6-adenosine threonylcarbamoyltransferase">
    <location>
        <begin position="1"/>
        <end position="342"/>
    </location>
</feature>
<feature type="binding site" evidence="1">
    <location>
        <position position="112"/>
    </location>
    <ligand>
        <name>Fe cation</name>
        <dbReference type="ChEBI" id="CHEBI:24875"/>
    </ligand>
</feature>
<feature type="binding site" evidence="1">
    <location>
        <position position="116"/>
    </location>
    <ligand>
        <name>Fe cation</name>
        <dbReference type="ChEBI" id="CHEBI:24875"/>
    </ligand>
</feature>
<feature type="binding site" evidence="1">
    <location>
        <begin position="134"/>
        <end position="138"/>
    </location>
    <ligand>
        <name>substrate</name>
    </ligand>
</feature>
<feature type="binding site" evidence="1">
    <location>
        <position position="167"/>
    </location>
    <ligand>
        <name>substrate</name>
    </ligand>
</feature>
<feature type="binding site" evidence="1">
    <location>
        <position position="180"/>
    </location>
    <ligand>
        <name>substrate</name>
    </ligand>
</feature>
<feature type="binding site" evidence="1">
    <location>
        <position position="278"/>
    </location>
    <ligand>
        <name>substrate</name>
    </ligand>
</feature>
<feature type="binding site" evidence="1">
    <location>
        <position position="306"/>
    </location>
    <ligand>
        <name>Fe cation</name>
        <dbReference type="ChEBI" id="CHEBI:24875"/>
    </ligand>
</feature>
<keyword id="KW-0012">Acyltransferase</keyword>
<keyword id="KW-0963">Cytoplasm</keyword>
<keyword id="KW-0408">Iron</keyword>
<keyword id="KW-0479">Metal-binding</keyword>
<keyword id="KW-0808">Transferase</keyword>
<keyword id="KW-0819">tRNA processing</keyword>
<name>TSAD_ANAPZ</name>